<comment type="subcellular location">
    <subcellularLocation>
        <location evidence="1">Secreted</location>
    </subcellularLocation>
</comment>
<comment type="tissue specificity">
    <text>Expressed by the venom duct.</text>
</comment>
<comment type="domain">
    <text evidence="1">The presence of a 'disulfide through disulfide knot' structurally defines this protein as a knottin.</text>
</comment>
<comment type="domain">
    <text>The cysteine framework is VI/VII (C-C-CC-C-C).</text>
</comment>
<comment type="similarity">
    <text evidence="3">Belongs to the conotoxin O1 superfamily.</text>
</comment>
<name>O163_CONMR</name>
<organism>
    <name type="scientific">Conus marmoreus</name>
    <name type="common">Marble cone</name>
    <dbReference type="NCBI Taxonomy" id="42752"/>
    <lineage>
        <taxon>Eukaryota</taxon>
        <taxon>Metazoa</taxon>
        <taxon>Spiralia</taxon>
        <taxon>Lophotrochozoa</taxon>
        <taxon>Mollusca</taxon>
        <taxon>Gastropoda</taxon>
        <taxon>Caenogastropoda</taxon>
        <taxon>Neogastropoda</taxon>
        <taxon>Conoidea</taxon>
        <taxon>Conidae</taxon>
        <taxon>Conus</taxon>
    </lineage>
</organism>
<reference key="1">
    <citation type="journal article" date="2006" name="Peptides">
        <title>Sequence diversity of O-superfamily conopeptides from Conus marmoreus native to Hainan.</title>
        <authorList>
            <person name="Luo S."/>
            <person name="Zhangsun D."/>
            <person name="Lin Q."/>
            <person name="Xie L."/>
            <person name="Wu Y."/>
            <person name="Zhu X."/>
        </authorList>
    </citation>
    <scope>NUCLEOTIDE SEQUENCE [MRNA]</scope>
    <source>
        <tissue>Venom duct</tissue>
    </source>
</reference>
<proteinExistence type="evidence at transcript level"/>
<sequence>MKLTCMMIVAVLFLTAWTLVTADGTRDGLKNRFPKARLEMKNSEAPRSRGRCRPPGMVCGFPKPGPYCCSGWCFAVCLPV</sequence>
<feature type="signal peptide" evidence="2">
    <location>
        <begin position="1"/>
        <end position="22"/>
    </location>
</feature>
<feature type="propeptide" id="PRO_0000315514" evidence="3">
    <location>
        <begin position="23"/>
        <end position="51"/>
    </location>
</feature>
<feature type="peptide" id="PRO_0000315515" description="Conotoxin MaIr193">
    <location>
        <begin position="52"/>
        <end position="80"/>
    </location>
</feature>
<feature type="modified residue" description="4-hydroxyproline" evidence="1">
    <location>
        <position position="64"/>
    </location>
</feature>
<feature type="disulfide bond" evidence="1">
    <location>
        <begin position="52"/>
        <end position="69"/>
    </location>
</feature>
<feature type="disulfide bond" evidence="1">
    <location>
        <begin position="59"/>
        <end position="73"/>
    </location>
</feature>
<feature type="disulfide bond" evidence="1">
    <location>
        <begin position="68"/>
        <end position="77"/>
    </location>
</feature>
<evidence type="ECO:0000250" key="1"/>
<evidence type="ECO:0000255" key="2"/>
<evidence type="ECO:0000305" key="3"/>
<accession>Q3YED1</accession>
<protein>
    <recommendedName>
        <fullName>Conotoxin MaIr193</fullName>
    </recommendedName>
</protein>
<dbReference type="EMBL" id="DQ141182">
    <property type="protein sequence ID" value="AAZ83781.1"/>
    <property type="molecule type" value="mRNA"/>
</dbReference>
<dbReference type="SMR" id="Q3YED1"/>
<dbReference type="ConoServer" id="1133">
    <property type="toxin name" value="MaIr193 precursor"/>
</dbReference>
<dbReference type="GO" id="GO:0005576">
    <property type="term" value="C:extracellular region"/>
    <property type="evidence" value="ECO:0007669"/>
    <property type="project" value="UniProtKB-SubCell"/>
</dbReference>
<dbReference type="GO" id="GO:0008200">
    <property type="term" value="F:ion channel inhibitor activity"/>
    <property type="evidence" value="ECO:0007669"/>
    <property type="project" value="InterPro"/>
</dbReference>
<dbReference type="GO" id="GO:0090729">
    <property type="term" value="F:toxin activity"/>
    <property type="evidence" value="ECO:0007669"/>
    <property type="project" value="UniProtKB-KW"/>
</dbReference>
<dbReference type="InterPro" id="IPR004214">
    <property type="entry name" value="Conotoxin"/>
</dbReference>
<dbReference type="Pfam" id="PF02950">
    <property type="entry name" value="Conotoxin"/>
    <property type="match status" value="1"/>
</dbReference>
<keyword id="KW-1015">Disulfide bond</keyword>
<keyword id="KW-0379">Hydroxylation</keyword>
<keyword id="KW-0960">Knottin</keyword>
<keyword id="KW-0528">Neurotoxin</keyword>
<keyword id="KW-0964">Secreted</keyword>
<keyword id="KW-0732">Signal</keyword>
<keyword id="KW-0800">Toxin</keyword>